<sequence length="379" mass="41758">MKHLALIGSTGSIGRQVLQVVRSIPDTFIIETLAAYGRNQEALISQIREFNPRVVAVREETTYKELRKLFPHIEILLGEEGLVSVATEPSVTITIVASSGIDALPAVIAAIRQKKTIALANKESLVAAGELVTTLARENGVQILPIDSEHNALFQCLEGRDSSTIKKLLLTASGGPLRNKSKEELQKVSLQEVLRHPVWNMGPKITVDSSTLVNKGLEIIEAFWLFGLEAVEIEAVIHPQSLVHGMVEFCDGTILSVMKPPSMLFPIQHVLTFPERSPAIGPGFDFLSNRTLEFFPIDEDRFPSVHLAKRVLLEKGSMGCFFNGANEALVHRFLAGEISWHQIVPKLQALVDQHRVQSCLSLEEILSVDAEARARAQEC</sequence>
<feature type="chain" id="PRO_1000098484" description="1-deoxy-D-xylulose 5-phosphate reductoisomerase">
    <location>
        <begin position="1"/>
        <end position="379"/>
    </location>
</feature>
<feature type="binding site" evidence="1">
    <location>
        <position position="10"/>
    </location>
    <ligand>
        <name>NADPH</name>
        <dbReference type="ChEBI" id="CHEBI:57783"/>
    </ligand>
</feature>
<feature type="binding site" evidence="1">
    <location>
        <position position="11"/>
    </location>
    <ligand>
        <name>NADPH</name>
        <dbReference type="ChEBI" id="CHEBI:57783"/>
    </ligand>
</feature>
<feature type="binding site" evidence="1">
    <location>
        <position position="12"/>
    </location>
    <ligand>
        <name>NADPH</name>
        <dbReference type="ChEBI" id="CHEBI:57783"/>
    </ligand>
</feature>
<feature type="binding site" evidence="1">
    <location>
        <position position="13"/>
    </location>
    <ligand>
        <name>NADPH</name>
        <dbReference type="ChEBI" id="CHEBI:57783"/>
    </ligand>
</feature>
<feature type="binding site" evidence="1">
    <location>
        <position position="38"/>
    </location>
    <ligand>
        <name>NADPH</name>
        <dbReference type="ChEBI" id="CHEBI:57783"/>
    </ligand>
</feature>
<feature type="binding site" evidence="1">
    <location>
        <position position="39"/>
    </location>
    <ligand>
        <name>NADPH</name>
        <dbReference type="ChEBI" id="CHEBI:57783"/>
    </ligand>
</feature>
<feature type="binding site" evidence="1">
    <location>
        <position position="121"/>
    </location>
    <ligand>
        <name>NADPH</name>
        <dbReference type="ChEBI" id="CHEBI:57783"/>
    </ligand>
</feature>
<feature type="binding site" evidence="1">
    <location>
        <position position="122"/>
    </location>
    <ligand>
        <name>1-deoxy-D-xylulose 5-phosphate</name>
        <dbReference type="ChEBI" id="CHEBI:57792"/>
    </ligand>
</feature>
<feature type="binding site" evidence="1">
    <location>
        <position position="123"/>
    </location>
    <ligand>
        <name>NADPH</name>
        <dbReference type="ChEBI" id="CHEBI:57783"/>
    </ligand>
</feature>
<feature type="binding site" evidence="1">
    <location>
        <position position="147"/>
    </location>
    <ligand>
        <name>Mn(2+)</name>
        <dbReference type="ChEBI" id="CHEBI:29035"/>
    </ligand>
</feature>
<feature type="binding site" evidence="1">
    <location>
        <position position="148"/>
    </location>
    <ligand>
        <name>1-deoxy-D-xylulose 5-phosphate</name>
        <dbReference type="ChEBI" id="CHEBI:57792"/>
    </ligand>
</feature>
<feature type="binding site" evidence="1">
    <location>
        <position position="149"/>
    </location>
    <ligand>
        <name>1-deoxy-D-xylulose 5-phosphate</name>
        <dbReference type="ChEBI" id="CHEBI:57792"/>
    </ligand>
</feature>
<feature type="binding site" evidence="1">
    <location>
        <position position="149"/>
    </location>
    <ligand>
        <name>Mn(2+)</name>
        <dbReference type="ChEBI" id="CHEBI:29035"/>
    </ligand>
</feature>
<feature type="binding site" evidence="1">
    <location>
        <position position="173"/>
    </location>
    <ligand>
        <name>1-deoxy-D-xylulose 5-phosphate</name>
        <dbReference type="ChEBI" id="CHEBI:57792"/>
    </ligand>
</feature>
<feature type="binding site" evidence="1">
    <location>
        <position position="196"/>
    </location>
    <ligand>
        <name>1-deoxy-D-xylulose 5-phosphate</name>
        <dbReference type="ChEBI" id="CHEBI:57792"/>
    </ligand>
</feature>
<feature type="binding site" evidence="1">
    <location>
        <position position="202"/>
    </location>
    <ligand>
        <name>NADPH</name>
        <dbReference type="ChEBI" id="CHEBI:57783"/>
    </ligand>
</feature>
<feature type="binding site" evidence="1">
    <location>
        <position position="209"/>
    </location>
    <ligand>
        <name>1-deoxy-D-xylulose 5-phosphate</name>
        <dbReference type="ChEBI" id="CHEBI:57792"/>
    </ligand>
</feature>
<feature type="binding site" evidence="1">
    <location>
        <position position="214"/>
    </location>
    <ligand>
        <name>1-deoxy-D-xylulose 5-phosphate</name>
        <dbReference type="ChEBI" id="CHEBI:57792"/>
    </ligand>
</feature>
<feature type="binding site" evidence="1">
    <location>
        <position position="215"/>
    </location>
    <ligand>
        <name>1-deoxy-D-xylulose 5-phosphate</name>
        <dbReference type="ChEBI" id="CHEBI:57792"/>
    </ligand>
</feature>
<feature type="binding site" evidence="1">
    <location>
        <position position="218"/>
    </location>
    <ligand>
        <name>1-deoxy-D-xylulose 5-phosphate</name>
        <dbReference type="ChEBI" id="CHEBI:57792"/>
    </ligand>
</feature>
<feature type="binding site" evidence="1">
    <location>
        <position position="218"/>
    </location>
    <ligand>
        <name>Mn(2+)</name>
        <dbReference type="ChEBI" id="CHEBI:29035"/>
    </ligand>
</feature>
<comment type="function">
    <text evidence="1">Catalyzes the NADPH-dependent rearrangement and reduction of 1-deoxy-D-xylulose-5-phosphate (DXP) to 2-C-methyl-D-erythritol 4-phosphate (MEP).</text>
</comment>
<comment type="catalytic activity">
    <reaction evidence="1">
        <text>2-C-methyl-D-erythritol 4-phosphate + NADP(+) = 1-deoxy-D-xylulose 5-phosphate + NADPH + H(+)</text>
        <dbReference type="Rhea" id="RHEA:13717"/>
        <dbReference type="ChEBI" id="CHEBI:15378"/>
        <dbReference type="ChEBI" id="CHEBI:57783"/>
        <dbReference type="ChEBI" id="CHEBI:57792"/>
        <dbReference type="ChEBI" id="CHEBI:58262"/>
        <dbReference type="ChEBI" id="CHEBI:58349"/>
        <dbReference type="EC" id="1.1.1.267"/>
    </reaction>
    <physiologicalReaction direction="right-to-left" evidence="1">
        <dbReference type="Rhea" id="RHEA:13719"/>
    </physiologicalReaction>
</comment>
<comment type="cofactor">
    <cofactor evidence="1">
        <name>Mg(2+)</name>
        <dbReference type="ChEBI" id="CHEBI:18420"/>
    </cofactor>
    <cofactor evidence="1">
        <name>Mn(2+)</name>
        <dbReference type="ChEBI" id="CHEBI:29035"/>
    </cofactor>
</comment>
<comment type="pathway">
    <text evidence="1">Isoprenoid biosynthesis; isopentenyl diphosphate biosynthesis via DXP pathway; isopentenyl diphosphate from 1-deoxy-D-xylulose 5-phosphate: step 1/6.</text>
</comment>
<comment type="similarity">
    <text evidence="1">Belongs to the DXR family.</text>
</comment>
<accession>B0B9H9</accession>
<organism>
    <name type="scientific">Chlamydia trachomatis serovar L2 (strain ATCC VR-902B / DSM 19102 / 434/Bu)</name>
    <dbReference type="NCBI Taxonomy" id="471472"/>
    <lineage>
        <taxon>Bacteria</taxon>
        <taxon>Pseudomonadati</taxon>
        <taxon>Chlamydiota</taxon>
        <taxon>Chlamydiia</taxon>
        <taxon>Chlamydiales</taxon>
        <taxon>Chlamydiaceae</taxon>
        <taxon>Chlamydia/Chlamydophila group</taxon>
        <taxon>Chlamydia</taxon>
    </lineage>
</organism>
<dbReference type="EC" id="1.1.1.267" evidence="1"/>
<dbReference type="EMBL" id="AM884176">
    <property type="protein sequence ID" value="CAP03766.1"/>
    <property type="molecule type" value="Genomic_DNA"/>
</dbReference>
<dbReference type="RefSeq" id="WP_009873537.1">
    <property type="nucleotide sequence ID" value="NC_010287.1"/>
</dbReference>
<dbReference type="RefSeq" id="YP_001654410.1">
    <property type="nucleotide sequence ID" value="NC_010287.1"/>
</dbReference>
<dbReference type="SMR" id="B0B9H9"/>
<dbReference type="KEGG" id="ctb:CTL0327"/>
<dbReference type="PATRIC" id="fig|471472.4.peg.354"/>
<dbReference type="HOGENOM" id="CLU_035714_4_0_0"/>
<dbReference type="UniPathway" id="UPA00056">
    <property type="reaction ID" value="UER00092"/>
</dbReference>
<dbReference type="Proteomes" id="UP001154402">
    <property type="component" value="Chromosome"/>
</dbReference>
<dbReference type="GO" id="GO:0030604">
    <property type="term" value="F:1-deoxy-D-xylulose-5-phosphate reductoisomerase activity"/>
    <property type="evidence" value="ECO:0007669"/>
    <property type="project" value="UniProtKB-UniRule"/>
</dbReference>
<dbReference type="GO" id="GO:0030145">
    <property type="term" value="F:manganese ion binding"/>
    <property type="evidence" value="ECO:0007669"/>
    <property type="project" value="TreeGrafter"/>
</dbReference>
<dbReference type="GO" id="GO:0070402">
    <property type="term" value="F:NADPH binding"/>
    <property type="evidence" value="ECO:0007669"/>
    <property type="project" value="InterPro"/>
</dbReference>
<dbReference type="GO" id="GO:0051484">
    <property type="term" value="P:isopentenyl diphosphate biosynthetic process, methylerythritol 4-phosphate pathway involved in terpenoid biosynthetic process"/>
    <property type="evidence" value="ECO:0007669"/>
    <property type="project" value="TreeGrafter"/>
</dbReference>
<dbReference type="FunFam" id="3.40.50.720:FF:000045">
    <property type="entry name" value="1-deoxy-D-xylulose 5-phosphate reductoisomerase"/>
    <property type="match status" value="1"/>
</dbReference>
<dbReference type="Gene3D" id="1.10.1740.10">
    <property type="match status" value="1"/>
</dbReference>
<dbReference type="Gene3D" id="3.40.50.720">
    <property type="entry name" value="NAD(P)-binding Rossmann-like Domain"/>
    <property type="match status" value="1"/>
</dbReference>
<dbReference type="HAMAP" id="MF_00183">
    <property type="entry name" value="DXP_reductoisom"/>
    <property type="match status" value="1"/>
</dbReference>
<dbReference type="InterPro" id="IPR003821">
    <property type="entry name" value="DXP_reductoisomerase"/>
</dbReference>
<dbReference type="InterPro" id="IPR013644">
    <property type="entry name" value="DXP_reductoisomerase_C"/>
</dbReference>
<dbReference type="InterPro" id="IPR013512">
    <property type="entry name" value="DXP_reductoisomerase_N"/>
</dbReference>
<dbReference type="InterPro" id="IPR026877">
    <property type="entry name" value="DXPR_C"/>
</dbReference>
<dbReference type="InterPro" id="IPR036169">
    <property type="entry name" value="DXPR_C_sf"/>
</dbReference>
<dbReference type="InterPro" id="IPR036291">
    <property type="entry name" value="NAD(P)-bd_dom_sf"/>
</dbReference>
<dbReference type="NCBIfam" id="TIGR00243">
    <property type="entry name" value="Dxr"/>
    <property type="match status" value="1"/>
</dbReference>
<dbReference type="PANTHER" id="PTHR30525">
    <property type="entry name" value="1-DEOXY-D-XYLULOSE 5-PHOSPHATE REDUCTOISOMERASE"/>
    <property type="match status" value="1"/>
</dbReference>
<dbReference type="PANTHER" id="PTHR30525:SF0">
    <property type="entry name" value="1-DEOXY-D-XYLULOSE 5-PHOSPHATE REDUCTOISOMERASE, CHLOROPLASTIC"/>
    <property type="match status" value="1"/>
</dbReference>
<dbReference type="Pfam" id="PF08436">
    <property type="entry name" value="DXP_redisom_C"/>
    <property type="match status" value="1"/>
</dbReference>
<dbReference type="Pfam" id="PF02670">
    <property type="entry name" value="DXP_reductoisom"/>
    <property type="match status" value="1"/>
</dbReference>
<dbReference type="Pfam" id="PF13288">
    <property type="entry name" value="DXPR_C"/>
    <property type="match status" value="1"/>
</dbReference>
<dbReference type="PIRSF" id="PIRSF006205">
    <property type="entry name" value="Dxp_reductismrs"/>
    <property type="match status" value="1"/>
</dbReference>
<dbReference type="SUPFAM" id="SSF69055">
    <property type="entry name" value="1-deoxy-D-xylulose-5-phosphate reductoisomerase, C-terminal domain"/>
    <property type="match status" value="1"/>
</dbReference>
<dbReference type="SUPFAM" id="SSF55347">
    <property type="entry name" value="Glyceraldehyde-3-phosphate dehydrogenase-like, C-terminal domain"/>
    <property type="match status" value="1"/>
</dbReference>
<dbReference type="SUPFAM" id="SSF51735">
    <property type="entry name" value="NAD(P)-binding Rossmann-fold domains"/>
    <property type="match status" value="1"/>
</dbReference>
<keyword id="KW-0414">Isoprene biosynthesis</keyword>
<keyword id="KW-0464">Manganese</keyword>
<keyword id="KW-0479">Metal-binding</keyword>
<keyword id="KW-0521">NADP</keyword>
<keyword id="KW-0560">Oxidoreductase</keyword>
<name>DXR_CHLT2</name>
<reference key="1">
    <citation type="journal article" date="2008" name="Genome Res.">
        <title>Chlamydia trachomatis: genome sequence analysis of lymphogranuloma venereum isolates.</title>
        <authorList>
            <person name="Thomson N.R."/>
            <person name="Holden M.T.G."/>
            <person name="Carder C."/>
            <person name="Lennard N."/>
            <person name="Lockey S.J."/>
            <person name="Marsh P."/>
            <person name="Skipp P."/>
            <person name="O'Connor C.D."/>
            <person name="Goodhead I."/>
            <person name="Norbertzcak H."/>
            <person name="Harris B."/>
            <person name="Ormond D."/>
            <person name="Rance R."/>
            <person name="Quail M.A."/>
            <person name="Parkhill J."/>
            <person name="Stephens R.S."/>
            <person name="Clarke I.N."/>
        </authorList>
    </citation>
    <scope>NUCLEOTIDE SEQUENCE [LARGE SCALE GENOMIC DNA]</scope>
    <source>
        <strain>ATCC VR-902B / DSM 19102 / 434/Bu</strain>
    </source>
</reference>
<protein>
    <recommendedName>
        <fullName evidence="1">1-deoxy-D-xylulose 5-phosphate reductoisomerase</fullName>
        <shortName evidence="1">DXP reductoisomerase</shortName>
        <ecNumber evidence="1">1.1.1.267</ecNumber>
    </recommendedName>
    <alternativeName>
        <fullName evidence="1">1-deoxyxylulose-5-phosphate reductoisomerase</fullName>
    </alternativeName>
    <alternativeName>
        <fullName evidence="1">2-C-methyl-D-erythritol 4-phosphate synthase</fullName>
    </alternativeName>
</protein>
<evidence type="ECO:0000255" key="1">
    <source>
        <dbReference type="HAMAP-Rule" id="MF_00183"/>
    </source>
</evidence>
<proteinExistence type="inferred from homology"/>
<gene>
    <name evidence="1" type="primary">dxr</name>
    <name type="ordered locus">CTL0327</name>
</gene>